<comment type="similarity">
    <text evidence="1">Belongs to the CrtC hydratase family.</text>
</comment>
<dbReference type="EC" id="1.-.-.-"/>
<dbReference type="EMBL" id="AF287480">
    <property type="protein sequence ID" value="AAG12193.1"/>
    <property type="molecule type" value="Genomic_DNA"/>
</dbReference>
<dbReference type="EMBL" id="AE006470">
    <property type="protein sequence ID" value="AAM71547.1"/>
    <property type="molecule type" value="Genomic_DNA"/>
</dbReference>
<dbReference type="RefSeq" id="NP_661205.1">
    <property type="nucleotide sequence ID" value="NC_002932.3"/>
</dbReference>
<dbReference type="RefSeq" id="WP_010931993.1">
    <property type="nucleotide sequence ID" value="NC_002932.3"/>
</dbReference>
<dbReference type="SMR" id="Q9F723"/>
<dbReference type="STRING" id="194439.CT0301"/>
<dbReference type="DNASU" id="1007961"/>
<dbReference type="EnsemblBacteria" id="AAM71547">
    <property type="protein sequence ID" value="AAM71547"/>
    <property type="gene ID" value="CT0301"/>
</dbReference>
<dbReference type="KEGG" id="cte:CT0301"/>
<dbReference type="PATRIC" id="fig|194439.7.peg.291"/>
<dbReference type="eggNOG" id="ENOG50333QK">
    <property type="taxonomic scope" value="Bacteria"/>
</dbReference>
<dbReference type="HOGENOM" id="CLU_709360_0_0_10"/>
<dbReference type="OrthoDB" id="5491608at2"/>
<dbReference type="BioCyc" id="MetaCyc:MONOMER-20353"/>
<dbReference type="Proteomes" id="UP000001007">
    <property type="component" value="Chromosome"/>
</dbReference>
<dbReference type="GO" id="GO:0016491">
    <property type="term" value="F:oxidoreductase activity"/>
    <property type="evidence" value="ECO:0007669"/>
    <property type="project" value="UniProtKB-KW"/>
</dbReference>
<dbReference type="GO" id="GO:0016117">
    <property type="term" value="P:carotenoid biosynthetic process"/>
    <property type="evidence" value="ECO:0007669"/>
    <property type="project" value="UniProtKB-KW"/>
</dbReference>
<dbReference type="GO" id="GO:0015995">
    <property type="term" value="P:chlorophyll biosynthetic process"/>
    <property type="evidence" value="ECO:0007669"/>
    <property type="project" value="UniProtKB-KW"/>
</dbReference>
<dbReference type="GO" id="GO:0015979">
    <property type="term" value="P:photosynthesis"/>
    <property type="evidence" value="ECO:0007669"/>
    <property type="project" value="UniProtKB-KW"/>
</dbReference>
<dbReference type="CDD" id="cd21471">
    <property type="entry name" value="CrtC-like"/>
    <property type="match status" value="1"/>
</dbReference>
<dbReference type="SUPFAM" id="SSF159245">
    <property type="entry name" value="AttH-like"/>
    <property type="match status" value="1"/>
</dbReference>
<evidence type="ECO:0000305" key="1"/>
<gene>
    <name type="primary">crtC</name>
    <name type="ordered locus">CT0301</name>
</gene>
<protein>
    <recommendedName>
        <fullName>Hydroxyneurosporene dehydrogenase</fullName>
        <ecNumber>1.-.-.-</ecNumber>
    </recommendedName>
    <alternativeName>
        <fullName>Hydroxyneurosporene synthase</fullName>
    </alternativeName>
</protein>
<organism>
    <name type="scientific">Chlorobaculum tepidum (strain ATCC 49652 / DSM 12025 / NBRC 103806 / TLS)</name>
    <name type="common">Chlorobium tepidum</name>
    <dbReference type="NCBI Taxonomy" id="194439"/>
    <lineage>
        <taxon>Bacteria</taxon>
        <taxon>Pseudomonadati</taxon>
        <taxon>Chlorobiota</taxon>
        <taxon>Chlorobiia</taxon>
        <taxon>Chlorobiales</taxon>
        <taxon>Chlorobiaceae</taxon>
        <taxon>Chlorobaculum</taxon>
    </lineage>
</organism>
<feature type="chain" id="PRO_0000079364" description="Hydroxyneurosporene dehydrogenase">
    <location>
        <begin position="1"/>
        <end position="382"/>
    </location>
</feature>
<name>Y301_CHLTE</name>
<proteinExistence type="inferred from homology"/>
<keyword id="KW-0125">Carotenoid biosynthesis</keyword>
<keyword id="KW-0149">Chlorophyll biosynthesis</keyword>
<keyword id="KW-0560">Oxidoreductase</keyword>
<keyword id="KW-0602">Photosynthesis</keyword>
<keyword id="KW-1185">Reference proteome</keyword>
<reference key="1">
    <citation type="journal article" date="2000" name="Science">
        <title>Molecular evidence for the early evolution of photosynthesis.</title>
        <authorList>
            <person name="Xiong J."/>
            <person name="Fischer W.M."/>
            <person name="Inoue K."/>
            <person name="Nakahara M."/>
            <person name="Bauer C.E."/>
        </authorList>
    </citation>
    <scope>NUCLEOTIDE SEQUENCE [GENOMIC DNA]</scope>
    <source>
        <strain>ATCC 49652 / DSM 12025 / NBRC 103806 / TLS</strain>
    </source>
</reference>
<reference key="2">
    <citation type="journal article" date="2002" name="Proc. Natl. Acad. Sci. U.S.A.">
        <title>The complete genome sequence of Chlorobium tepidum TLS, a photosynthetic, anaerobic, green-sulfur bacterium.</title>
        <authorList>
            <person name="Eisen J.A."/>
            <person name="Nelson K.E."/>
            <person name="Paulsen I.T."/>
            <person name="Heidelberg J.F."/>
            <person name="Wu M."/>
            <person name="Dodson R.J."/>
            <person name="DeBoy R.T."/>
            <person name="Gwinn M.L."/>
            <person name="Nelson W.C."/>
            <person name="Haft D.H."/>
            <person name="Hickey E.K."/>
            <person name="Peterson J.D."/>
            <person name="Durkin A.S."/>
            <person name="Kolonay J.F."/>
            <person name="Yang F."/>
            <person name="Holt I.E."/>
            <person name="Umayam L.A."/>
            <person name="Mason T.M."/>
            <person name="Brenner M."/>
            <person name="Shea T.P."/>
            <person name="Parksey D.S."/>
            <person name="Nierman W.C."/>
            <person name="Feldblyum T.V."/>
            <person name="Hansen C.L."/>
            <person name="Craven M.B."/>
            <person name="Radune D."/>
            <person name="Vamathevan J.J."/>
            <person name="Khouri H.M."/>
            <person name="White O."/>
            <person name="Gruber T.M."/>
            <person name="Ketchum K.A."/>
            <person name="Venter J.C."/>
            <person name="Tettelin H."/>
            <person name="Bryant D.A."/>
            <person name="Fraser C.M."/>
        </authorList>
    </citation>
    <scope>NUCLEOTIDE SEQUENCE [LARGE SCALE GENOMIC DNA]</scope>
    <source>
        <strain>ATCC 49652 / DSM 12025 / NBRC 103806 / TLS</strain>
    </source>
</reference>
<sequence length="382" mass="44955">MNITTDSLQQAWHRLDAPGSYEWWYFDAEDESEGISVVFIWFVGFAFSPYYLSHYEEWKAHRRDDQPYPLDYGGFSFQLYQDGRETINFIKEGGRELFASEDGGIGVRFEGNRFVYDPLRDEYRLSIDFSFPARDRSVQASFSFRPLHRFDYHFDTDLHAGVDFRHQWVLSVPKAEVHGLLDITSLSSDKRQVLQFRGRGYHDHNLGTVPMYESIDRWYWGRTFSRRCDLIYYVVFLRGCSAEPQAVLMLLDHKTGRQSTFDAVRVSESRFTRGLFAPVHGKTLRLEAEGVSVEVQHQKALDTGPFYLRYTSLLSMMIGEEAQEEVRGISEFLNPAPLKSRLMQFFTASRVWRAGKQSAMYVLYNFFKHRFERVHRINRKKF</sequence>
<accession>Q9F723</accession>